<keyword id="KW-0274">FAD</keyword>
<keyword id="KW-0285">Flavoprotein</keyword>
<keyword id="KW-0489">Methyltransferase</keyword>
<keyword id="KW-0521">NADP</keyword>
<keyword id="KW-0545">Nucleotide biosynthesis</keyword>
<keyword id="KW-1185">Reference proteome</keyword>
<keyword id="KW-0808">Transferase</keyword>
<comment type="function">
    <text evidence="1">Catalyzes the reductive methylation of 2'-deoxyuridine-5'-monophosphate (dUMP) to 2'-deoxythymidine-5'-monophosphate (dTMP) while utilizing 5,10-methylenetetrahydrofolate (mTHF) as the methyl donor, and NADPH and FADH(2) as the reductant.</text>
</comment>
<comment type="catalytic activity">
    <reaction evidence="1">
        <text>dUMP + (6R)-5,10-methylene-5,6,7,8-tetrahydrofolate + NADPH + H(+) = dTMP + (6S)-5,6,7,8-tetrahydrofolate + NADP(+)</text>
        <dbReference type="Rhea" id="RHEA:29043"/>
        <dbReference type="ChEBI" id="CHEBI:15378"/>
        <dbReference type="ChEBI" id="CHEBI:15636"/>
        <dbReference type="ChEBI" id="CHEBI:57453"/>
        <dbReference type="ChEBI" id="CHEBI:57783"/>
        <dbReference type="ChEBI" id="CHEBI:58349"/>
        <dbReference type="ChEBI" id="CHEBI:63528"/>
        <dbReference type="ChEBI" id="CHEBI:246422"/>
        <dbReference type="EC" id="2.1.1.148"/>
    </reaction>
</comment>
<comment type="cofactor">
    <cofactor evidence="1">
        <name>FAD</name>
        <dbReference type="ChEBI" id="CHEBI:57692"/>
    </cofactor>
    <text evidence="1">Binds 4 FAD per tetramer. Each FAD binding site is formed by three monomers.</text>
</comment>
<comment type="pathway">
    <text evidence="1">Pyrimidine metabolism; dTTP biosynthesis.</text>
</comment>
<comment type="subunit">
    <text evidence="1">Homotetramer.</text>
</comment>
<comment type="similarity">
    <text evidence="1">Belongs to the thymidylate synthase ThyX family.</text>
</comment>
<feature type="chain" id="PRO_1000184589" description="Flavin-dependent thymidylate synthase">
    <location>
        <begin position="1"/>
        <end position="250"/>
    </location>
</feature>
<feature type="domain" description="ThyX" evidence="2">
    <location>
        <begin position="7"/>
        <end position="233"/>
    </location>
</feature>
<feature type="short sequence motif" description="ThyX motif" evidence="1">
    <location>
        <begin position="95"/>
        <end position="105"/>
    </location>
</feature>
<feature type="active site" description="Involved in ionization of N3 of dUMP, leading to its activation" evidence="1">
    <location>
        <position position="199"/>
    </location>
</feature>
<feature type="binding site" evidence="1">
    <location>
        <position position="71"/>
    </location>
    <ligand>
        <name>FAD</name>
        <dbReference type="ChEBI" id="CHEBI:57692"/>
        <note>ligand shared between neighboring subunits</note>
    </ligand>
</feature>
<feature type="binding site" evidence="1">
    <location>
        <begin position="92"/>
        <end position="95"/>
    </location>
    <ligand>
        <name>dUMP</name>
        <dbReference type="ChEBI" id="CHEBI:246422"/>
        <note>ligand shared between dimeric partners</note>
    </ligand>
</feature>
<feature type="binding site" evidence="1">
    <location>
        <begin position="95"/>
        <end position="97"/>
    </location>
    <ligand>
        <name>FAD</name>
        <dbReference type="ChEBI" id="CHEBI:57692"/>
        <note>ligand shared between neighboring subunits</note>
    </ligand>
</feature>
<feature type="binding site" description="in other chain" evidence="1">
    <location>
        <begin position="103"/>
        <end position="107"/>
    </location>
    <ligand>
        <name>dUMP</name>
        <dbReference type="ChEBI" id="CHEBI:246422"/>
        <note>ligand shared between dimeric partners</note>
    </ligand>
</feature>
<feature type="binding site" evidence="1">
    <location>
        <position position="103"/>
    </location>
    <ligand>
        <name>FAD</name>
        <dbReference type="ChEBI" id="CHEBI:57692"/>
        <note>ligand shared between neighboring subunits</note>
    </ligand>
</feature>
<feature type="binding site" description="in other chain" evidence="1">
    <location>
        <position position="172"/>
    </location>
    <ligand>
        <name>dUMP</name>
        <dbReference type="ChEBI" id="CHEBI:246422"/>
        <note>ligand shared between dimeric partners</note>
    </ligand>
</feature>
<feature type="binding site" evidence="1">
    <location>
        <begin position="188"/>
        <end position="190"/>
    </location>
    <ligand>
        <name>FAD</name>
        <dbReference type="ChEBI" id="CHEBI:57692"/>
        <note>ligand shared between neighboring subunits</note>
    </ligand>
</feature>
<feature type="binding site" evidence="1">
    <location>
        <position position="194"/>
    </location>
    <ligand>
        <name>FAD</name>
        <dbReference type="ChEBI" id="CHEBI:57692"/>
        <note>ligand shared between neighboring subunits</note>
    </ligand>
</feature>
<feature type="binding site" evidence="1">
    <location>
        <position position="199"/>
    </location>
    <ligand>
        <name>dUMP</name>
        <dbReference type="ChEBI" id="CHEBI:246422"/>
        <note>ligand shared between dimeric partners</note>
    </ligand>
</feature>
<gene>
    <name evidence="1" type="primary">thyX</name>
    <name type="ordered locus">MAB_3085c</name>
</gene>
<dbReference type="EC" id="2.1.1.148" evidence="1"/>
<dbReference type="EMBL" id="CU458896">
    <property type="protein sequence ID" value="CAM63163.1"/>
    <property type="molecule type" value="Genomic_DNA"/>
</dbReference>
<dbReference type="RefSeq" id="WP_005057143.1">
    <property type="nucleotide sequence ID" value="NZ_MLCG01000003.1"/>
</dbReference>
<dbReference type="SMR" id="B1MD42"/>
<dbReference type="GeneID" id="93380018"/>
<dbReference type="KEGG" id="mab:MAB_3085c"/>
<dbReference type="UniPathway" id="UPA00575"/>
<dbReference type="Proteomes" id="UP000007137">
    <property type="component" value="Chromosome"/>
</dbReference>
<dbReference type="GO" id="GO:0050660">
    <property type="term" value="F:flavin adenine dinucleotide binding"/>
    <property type="evidence" value="ECO:0007669"/>
    <property type="project" value="InterPro"/>
</dbReference>
<dbReference type="GO" id="GO:0070402">
    <property type="term" value="F:NADPH binding"/>
    <property type="evidence" value="ECO:0007669"/>
    <property type="project" value="TreeGrafter"/>
</dbReference>
<dbReference type="GO" id="GO:0050797">
    <property type="term" value="F:thymidylate synthase (FAD) activity"/>
    <property type="evidence" value="ECO:0007669"/>
    <property type="project" value="UniProtKB-UniRule"/>
</dbReference>
<dbReference type="GO" id="GO:0004799">
    <property type="term" value="F:thymidylate synthase activity"/>
    <property type="evidence" value="ECO:0007669"/>
    <property type="project" value="TreeGrafter"/>
</dbReference>
<dbReference type="GO" id="GO:0006231">
    <property type="term" value="P:dTMP biosynthetic process"/>
    <property type="evidence" value="ECO:0007669"/>
    <property type="project" value="UniProtKB-UniRule"/>
</dbReference>
<dbReference type="GO" id="GO:0006235">
    <property type="term" value="P:dTTP biosynthetic process"/>
    <property type="evidence" value="ECO:0007669"/>
    <property type="project" value="UniProtKB-UniRule"/>
</dbReference>
<dbReference type="GO" id="GO:0032259">
    <property type="term" value="P:methylation"/>
    <property type="evidence" value="ECO:0007669"/>
    <property type="project" value="UniProtKB-KW"/>
</dbReference>
<dbReference type="CDD" id="cd20175">
    <property type="entry name" value="ThyX"/>
    <property type="match status" value="1"/>
</dbReference>
<dbReference type="Gene3D" id="3.30.1360.170">
    <property type="match status" value="1"/>
</dbReference>
<dbReference type="Gene3D" id="3.30.70.3180">
    <property type="match status" value="1"/>
</dbReference>
<dbReference type="HAMAP" id="MF_01408">
    <property type="entry name" value="ThyX"/>
    <property type="match status" value="1"/>
</dbReference>
<dbReference type="InterPro" id="IPR003669">
    <property type="entry name" value="Thymidylate_synthase_ThyX"/>
</dbReference>
<dbReference type="InterPro" id="IPR036098">
    <property type="entry name" value="Thymidylate_synthase_ThyX_sf"/>
</dbReference>
<dbReference type="NCBIfam" id="TIGR02170">
    <property type="entry name" value="thyX"/>
    <property type="match status" value="1"/>
</dbReference>
<dbReference type="PANTHER" id="PTHR34934">
    <property type="entry name" value="FLAVIN-DEPENDENT THYMIDYLATE SYNTHASE"/>
    <property type="match status" value="1"/>
</dbReference>
<dbReference type="PANTHER" id="PTHR34934:SF1">
    <property type="entry name" value="FLAVIN-DEPENDENT THYMIDYLATE SYNTHASE"/>
    <property type="match status" value="1"/>
</dbReference>
<dbReference type="Pfam" id="PF02511">
    <property type="entry name" value="Thy1"/>
    <property type="match status" value="1"/>
</dbReference>
<dbReference type="SUPFAM" id="SSF69796">
    <property type="entry name" value="Thymidylate synthase-complementing protein Thy1"/>
    <property type="match status" value="1"/>
</dbReference>
<dbReference type="PROSITE" id="PS51331">
    <property type="entry name" value="THYX"/>
    <property type="match status" value="1"/>
</dbReference>
<organism>
    <name type="scientific">Mycobacteroides abscessus (strain ATCC 19977 / DSM 44196 / CCUG 20993 / CIP 104536 / JCM 13569 / NCTC 13031 / TMC 1543 / L948)</name>
    <name type="common">Mycobacterium abscessus</name>
    <dbReference type="NCBI Taxonomy" id="561007"/>
    <lineage>
        <taxon>Bacteria</taxon>
        <taxon>Bacillati</taxon>
        <taxon>Actinomycetota</taxon>
        <taxon>Actinomycetes</taxon>
        <taxon>Mycobacteriales</taxon>
        <taxon>Mycobacteriaceae</taxon>
        <taxon>Mycobacteroides</taxon>
        <taxon>Mycobacteroides abscessus</taxon>
    </lineage>
</organism>
<accession>B1MD42</accession>
<evidence type="ECO:0000255" key="1">
    <source>
        <dbReference type="HAMAP-Rule" id="MF_01408"/>
    </source>
</evidence>
<evidence type="ECO:0000255" key="2">
    <source>
        <dbReference type="PROSITE-ProRule" id="PRU00661"/>
    </source>
</evidence>
<sequence>MAEIVPLRVQLIAKTDFIAPPDIDWSTDADGGPALVEFAGRACYQSWSKPNPRTATNESYLRHVIEVGHLSVLEHASATFYITGISRSCTHELIRHRHFSYSQLSQRFVPEDDSNVVLPPAVEDDPELVALVRKATDASRAAYVELLEKLESTLADVPNAVLRRKQARQAARSVLPNATETRIVVTGNYRAWRHFIAMRASEHADVEIRRLAIACLRQLADLAPSIFGDFDIATLADGTEVAISPLVYEG</sequence>
<proteinExistence type="inferred from homology"/>
<reference key="1">
    <citation type="journal article" date="2009" name="PLoS ONE">
        <title>Non mycobacterial virulence genes in the genome of the emerging pathogen Mycobacterium abscessus.</title>
        <authorList>
            <person name="Ripoll F."/>
            <person name="Pasek S."/>
            <person name="Schenowitz C."/>
            <person name="Dossat C."/>
            <person name="Barbe V."/>
            <person name="Rottman M."/>
            <person name="Macheras E."/>
            <person name="Heym B."/>
            <person name="Herrmann J.L."/>
            <person name="Daffe M."/>
            <person name="Brosch R."/>
            <person name="Risler J.L."/>
            <person name="Gaillard J.L."/>
        </authorList>
    </citation>
    <scope>NUCLEOTIDE SEQUENCE [LARGE SCALE GENOMIC DNA]</scope>
    <source>
        <strain>ATCC 19977 / DSM 44196 / CCUG 20993 / CIP 104536 / JCM 13569 / NCTC 13031 / TMC 1543 / L948</strain>
    </source>
</reference>
<protein>
    <recommendedName>
        <fullName evidence="1">Flavin-dependent thymidylate synthase</fullName>
        <shortName evidence="1">FDTS</shortName>
        <ecNumber evidence="1">2.1.1.148</ecNumber>
    </recommendedName>
    <alternativeName>
        <fullName evidence="1">FAD-dependent thymidylate synthase</fullName>
    </alternativeName>
    <alternativeName>
        <fullName evidence="1">Thymidylate synthase ThyX</fullName>
        <shortName evidence="1">TS</shortName>
        <shortName evidence="1">TSase</shortName>
    </alternativeName>
</protein>
<name>THYX_MYCA9</name>